<reference key="1">
    <citation type="journal article" date="2003" name="Mol. Microbiol.">
        <title>Genome-based analysis of virulence genes in a non-biofilm-forming Staphylococcus epidermidis strain (ATCC 12228).</title>
        <authorList>
            <person name="Zhang Y.-Q."/>
            <person name="Ren S.-X."/>
            <person name="Li H.-L."/>
            <person name="Wang Y.-X."/>
            <person name="Fu G."/>
            <person name="Yang J."/>
            <person name="Qin Z.-Q."/>
            <person name="Miao Y.-G."/>
            <person name="Wang W.-Y."/>
            <person name="Chen R.-S."/>
            <person name="Shen Y."/>
            <person name="Chen Z."/>
            <person name="Yuan Z.-H."/>
            <person name="Zhao G.-P."/>
            <person name="Qu D."/>
            <person name="Danchin A."/>
            <person name="Wen Y.-M."/>
        </authorList>
    </citation>
    <scope>NUCLEOTIDE SEQUENCE [LARGE SCALE GENOMIC DNA]</scope>
    <source>
        <strain>ATCC 12228 / FDA PCI 1200</strain>
    </source>
</reference>
<dbReference type="EC" id="6.3.5.-" evidence="1"/>
<dbReference type="EMBL" id="AE015929">
    <property type="protein sequence ID" value="AAO05183.1"/>
    <property type="molecule type" value="Genomic_DNA"/>
</dbReference>
<dbReference type="RefSeq" id="NP_765139.1">
    <property type="nucleotide sequence ID" value="NC_004461.1"/>
</dbReference>
<dbReference type="RefSeq" id="WP_002457087.1">
    <property type="nucleotide sequence ID" value="NZ_WBME01000010.1"/>
</dbReference>
<dbReference type="SMR" id="Q8CRU4"/>
<dbReference type="GeneID" id="50018316"/>
<dbReference type="KEGG" id="sep:SE_1584"/>
<dbReference type="PATRIC" id="fig|176280.10.peg.1548"/>
<dbReference type="eggNOG" id="COG0064">
    <property type="taxonomic scope" value="Bacteria"/>
</dbReference>
<dbReference type="HOGENOM" id="CLU_019240_0_0_9"/>
<dbReference type="OrthoDB" id="9804078at2"/>
<dbReference type="Proteomes" id="UP000001411">
    <property type="component" value="Chromosome"/>
</dbReference>
<dbReference type="GO" id="GO:0050566">
    <property type="term" value="F:asparaginyl-tRNA synthase (glutamine-hydrolyzing) activity"/>
    <property type="evidence" value="ECO:0007669"/>
    <property type="project" value="RHEA"/>
</dbReference>
<dbReference type="GO" id="GO:0005524">
    <property type="term" value="F:ATP binding"/>
    <property type="evidence" value="ECO:0007669"/>
    <property type="project" value="UniProtKB-KW"/>
</dbReference>
<dbReference type="GO" id="GO:0050567">
    <property type="term" value="F:glutaminyl-tRNA synthase (glutamine-hydrolyzing) activity"/>
    <property type="evidence" value="ECO:0007669"/>
    <property type="project" value="UniProtKB-UniRule"/>
</dbReference>
<dbReference type="GO" id="GO:0070681">
    <property type="term" value="P:glutaminyl-tRNAGln biosynthesis via transamidation"/>
    <property type="evidence" value="ECO:0007669"/>
    <property type="project" value="TreeGrafter"/>
</dbReference>
<dbReference type="GO" id="GO:0006412">
    <property type="term" value="P:translation"/>
    <property type="evidence" value="ECO:0007669"/>
    <property type="project" value="UniProtKB-UniRule"/>
</dbReference>
<dbReference type="FunFam" id="1.10.10.410:FF:000001">
    <property type="entry name" value="Aspartyl/glutamyl-tRNA(Asn/Gln) amidotransferase subunit B"/>
    <property type="match status" value="1"/>
</dbReference>
<dbReference type="FunFam" id="1.10.150.380:FF:000001">
    <property type="entry name" value="Aspartyl/glutamyl-tRNA(Asn/Gln) amidotransferase subunit B"/>
    <property type="match status" value="1"/>
</dbReference>
<dbReference type="Gene3D" id="1.10.10.410">
    <property type="match status" value="1"/>
</dbReference>
<dbReference type="Gene3D" id="1.10.150.380">
    <property type="entry name" value="GatB domain, N-terminal subdomain"/>
    <property type="match status" value="1"/>
</dbReference>
<dbReference type="HAMAP" id="MF_00121">
    <property type="entry name" value="GatB"/>
    <property type="match status" value="1"/>
</dbReference>
<dbReference type="InterPro" id="IPR017959">
    <property type="entry name" value="Asn/Gln-tRNA_amidoTrfase_suB/E"/>
</dbReference>
<dbReference type="InterPro" id="IPR006075">
    <property type="entry name" value="Asn/Gln-tRNA_Trfase_suB/E_cat"/>
</dbReference>
<dbReference type="InterPro" id="IPR018027">
    <property type="entry name" value="Asn/Gln_amidotransferase"/>
</dbReference>
<dbReference type="InterPro" id="IPR003789">
    <property type="entry name" value="Asn/Gln_tRNA_amidoTrase-B-like"/>
</dbReference>
<dbReference type="InterPro" id="IPR004413">
    <property type="entry name" value="GatB"/>
</dbReference>
<dbReference type="InterPro" id="IPR042114">
    <property type="entry name" value="GatB_C_1"/>
</dbReference>
<dbReference type="InterPro" id="IPR023168">
    <property type="entry name" value="GatB_Yqey_C_2"/>
</dbReference>
<dbReference type="InterPro" id="IPR017958">
    <property type="entry name" value="Gln-tRNA_amidoTrfase_suB_CS"/>
</dbReference>
<dbReference type="InterPro" id="IPR014746">
    <property type="entry name" value="Gln_synth/guanido_kin_cat_dom"/>
</dbReference>
<dbReference type="NCBIfam" id="TIGR00133">
    <property type="entry name" value="gatB"/>
    <property type="match status" value="1"/>
</dbReference>
<dbReference type="NCBIfam" id="NF004011">
    <property type="entry name" value="PRK05477.1-1"/>
    <property type="match status" value="1"/>
</dbReference>
<dbReference type="NCBIfam" id="NF004012">
    <property type="entry name" value="PRK05477.1-2"/>
    <property type="match status" value="1"/>
</dbReference>
<dbReference type="NCBIfam" id="NF004014">
    <property type="entry name" value="PRK05477.1-4"/>
    <property type="match status" value="1"/>
</dbReference>
<dbReference type="PANTHER" id="PTHR11659">
    <property type="entry name" value="GLUTAMYL-TRNA GLN AMIDOTRANSFERASE SUBUNIT B MITOCHONDRIAL AND PROKARYOTIC PET112-RELATED"/>
    <property type="match status" value="1"/>
</dbReference>
<dbReference type="PANTHER" id="PTHR11659:SF0">
    <property type="entry name" value="GLUTAMYL-TRNA(GLN) AMIDOTRANSFERASE SUBUNIT B, MITOCHONDRIAL"/>
    <property type="match status" value="1"/>
</dbReference>
<dbReference type="Pfam" id="PF02934">
    <property type="entry name" value="GatB_N"/>
    <property type="match status" value="1"/>
</dbReference>
<dbReference type="Pfam" id="PF02637">
    <property type="entry name" value="GatB_Yqey"/>
    <property type="match status" value="1"/>
</dbReference>
<dbReference type="SMART" id="SM00845">
    <property type="entry name" value="GatB_Yqey"/>
    <property type="match status" value="1"/>
</dbReference>
<dbReference type="SUPFAM" id="SSF89095">
    <property type="entry name" value="GatB/YqeY motif"/>
    <property type="match status" value="1"/>
</dbReference>
<dbReference type="SUPFAM" id="SSF55931">
    <property type="entry name" value="Glutamine synthetase/guanido kinase"/>
    <property type="match status" value="1"/>
</dbReference>
<dbReference type="PROSITE" id="PS01234">
    <property type="entry name" value="GATB"/>
    <property type="match status" value="1"/>
</dbReference>
<keyword id="KW-0067">ATP-binding</keyword>
<keyword id="KW-0436">Ligase</keyword>
<keyword id="KW-0547">Nucleotide-binding</keyword>
<keyword id="KW-0648">Protein biosynthesis</keyword>
<organism>
    <name type="scientific">Staphylococcus epidermidis (strain ATCC 12228 / FDA PCI 1200)</name>
    <dbReference type="NCBI Taxonomy" id="176280"/>
    <lineage>
        <taxon>Bacteria</taxon>
        <taxon>Bacillati</taxon>
        <taxon>Bacillota</taxon>
        <taxon>Bacilli</taxon>
        <taxon>Bacillales</taxon>
        <taxon>Staphylococcaceae</taxon>
        <taxon>Staphylococcus</taxon>
    </lineage>
</organism>
<protein>
    <recommendedName>
        <fullName evidence="1">Aspartyl/glutamyl-tRNA(Asn/Gln) amidotransferase subunit B</fullName>
        <shortName evidence="1">Asp/Glu-ADT subunit B</shortName>
        <ecNumber evidence="1">6.3.5.-</ecNumber>
    </recommendedName>
</protein>
<gene>
    <name evidence="1" type="primary">gatB</name>
    <name type="ordered locus">SE_1584</name>
</gene>
<sequence length="475" mass="53609">MHFETVIGLEVHVELKTDSKMFSPSPAHFGAEPNSNTNVIDLAYPGVLPVVNRRAVDWAMRASMALNMDIATNSKFDRKNYFYPDNPKAYQISQFDQPIGENGYIDIEVDGETKRIGITRLHMEEDAGKSTHKDGYSLVDLNRQGTPLIEIVSEPDIRSPKEAYAYLEKLRSIIQYTGVSDCKMEEGSLRCDANISLRPYGQKEFGTKTELKNLNSFNYVKKGLEYEEKRQEEELLNGGEIGQETRRFDESTGKTILMRVKEGSDDYRYFPEPDIVPLYVDEDWKARVRETIPELPDERKAKYVNDLGLPEYDAHVLTLTKEMSDFFEGAIDHGADVKLTSNWLMGGVNEYLNKNQVELKDTQLTPENLAGMIKLIEDGTMSSKIAKKVFPELAENGGDAKQIMEDKGLVQISDEATLLKFVTDALDNNPQSIEDYKNGKGKAMGFLVGQIMKASKGQANPQKVNSLLKQELDNR</sequence>
<feature type="chain" id="PRO_0000148840" description="Aspartyl/glutamyl-tRNA(Asn/Gln) amidotransferase subunit B">
    <location>
        <begin position="1"/>
        <end position="475"/>
    </location>
</feature>
<accession>Q8CRU4</accession>
<comment type="function">
    <text evidence="1">Allows the formation of correctly charged Asn-tRNA(Asn) or Gln-tRNA(Gln) through the transamidation of misacylated Asp-tRNA(Asn) or Glu-tRNA(Gln) in organisms which lack either or both of asparaginyl-tRNA or glutaminyl-tRNA synthetases. The reaction takes place in the presence of glutamine and ATP through an activated phospho-Asp-tRNA(Asn) or phospho-Glu-tRNA(Gln).</text>
</comment>
<comment type="catalytic activity">
    <reaction evidence="1">
        <text>L-glutamyl-tRNA(Gln) + L-glutamine + ATP + H2O = L-glutaminyl-tRNA(Gln) + L-glutamate + ADP + phosphate + H(+)</text>
        <dbReference type="Rhea" id="RHEA:17521"/>
        <dbReference type="Rhea" id="RHEA-COMP:9681"/>
        <dbReference type="Rhea" id="RHEA-COMP:9684"/>
        <dbReference type="ChEBI" id="CHEBI:15377"/>
        <dbReference type="ChEBI" id="CHEBI:15378"/>
        <dbReference type="ChEBI" id="CHEBI:29985"/>
        <dbReference type="ChEBI" id="CHEBI:30616"/>
        <dbReference type="ChEBI" id="CHEBI:43474"/>
        <dbReference type="ChEBI" id="CHEBI:58359"/>
        <dbReference type="ChEBI" id="CHEBI:78520"/>
        <dbReference type="ChEBI" id="CHEBI:78521"/>
        <dbReference type="ChEBI" id="CHEBI:456216"/>
    </reaction>
</comment>
<comment type="catalytic activity">
    <reaction evidence="1">
        <text>L-aspartyl-tRNA(Asn) + L-glutamine + ATP + H2O = L-asparaginyl-tRNA(Asn) + L-glutamate + ADP + phosphate + 2 H(+)</text>
        <dbReference type="Rhea" id="RHEA:14513"/>
        <dbReference type="Rhea" id="RHEA-COMP:9674"/>
        <dbReference type="Rhea" id="RHEA-COMP:9677"/>
        <dbReference type="ChEBI" id="CHEBI:15377"/>
        <dbReference type="ChEBI" id="CHEBI:15378"/>
        <dbReference type="ChEBI" id="CHEBI:29985"/>
        <dbReference type="ChEBI" id="CHEBI:30616"/>
        <dbReference type="ChEBI" id="CHEBI:43474"/>
        <dbReference type="ChEBI" id="CHEBI:58359"/>
        <dbReference type="ChEBI" id="CHEBI:78515"/>
        <dbReference type="ChEBI" id="CHEBI:78516"/>
        <dbReference type="ChEBI" id="CHEBI:456216"/>
    </reaction>
</comment>
<comment type="subunit">
    <text evidence="1">Heterotrimer of A, B and C subunits.</text>
</comment>
<comment type="similarity">
    <text evidence="1">Belongs to the GatB/GatE family. GatB subfamily.</text>
</comment>
<name>GATB_STAES</name>
<proteinExistence type="inferred from homology"/>
<evidence type="ECO:0000255" key="1">
    <source>
        <dbReference type="HAMAP-Rule" id="MF_00121"/>
    </source>
</evidence>